<accession>A9M0W6</accession>
<feature type="chain" id="PRO_0000375625" description="Succinyl-diaminopimelate desuccinylase">
    <location>
        <begin position="1"/>
        <end position="381"/>
    </location>
</feature>
<feature type="active site" evidence="1">
    <location>
        <position position="70"/>
    </location>
</feature>
<feature type="active site" description="Proton acceptor" evidence="1">
    <location>
        <position position="135"/>
    </location>
</feature>
<feature type="binding site" evidence="1">
    <location>
        <position position="68"/>
    </location>
    <ligand>
        <name>Zn(2+)</name>
        <dbReference type="ChEBI" id="CHEBI:29105"/>
        <label>1</label>
    </ligand>
</feature>
<feature type="binding site" evidence="1">
    <location>
        <position position="101"/>
    </location>
    <ligand>
        <name>Zn(2+)</name>
        <dbReference type="ChEBI" id="CHEBI:29105"/>
        <label>1</label>
    </ligand>
</feature>
<feature type="binding site" evidence="1">
    <location>
        <position position="101"/>
    </location>
    <ligand>
        <name>Zn(2+)</name>
        <dbReference type="ChEBI" id="CHEBI:29105"/>
        <label>2</label>
    </ligand>
</feature>
<feature type="binding site" evidence="1">
    <location>
        <position position="136"/>
    </location>
    <ligand>
        <name>Zn(2+)</name>
        <dbReference type="ChEBI" id="CHEBI:29105"/>
        <label>2</label>
    </ligand>
</feature>
<feature type="binding site" evidence="1">
    <location>
        <position position="164"/>
    </location>
    <ligand>
        <name>Zn(2+)</name>
        <dbReference type="ChEBI" id="CHEBI:29105"/>
        <label>1</label>
    </ligand>
</feature>
<feature type="binding site" evidence="1">
    <location>
        <position position="350"/>
    </location>
    <ligand>
        <name>Zn(2+)</name>
        <dbReference type="ChEBI" id="CHEBI:29105"/>
        <label>2</label>
    </ligand>
</feature>
<protein>
    <recommendedName>
        <fullName evidence="1">Succinyl-diaminopimelate desuccinylase</fullName>
        <shortName evidence="1">SDAP desuccinylase</shortName>
        <ecNumber evidence="1">3.5.1.18</ecNumber>
    </recommendedName>
    <alternativeName>
        <fullName evidence="1">N-succinyl-LL-2,6-diaminoheptanedioate amidohydrolase</fullName>
    </alternativeName>
</protein>
<gene>
    <name evidence="1" type="primary">dapE</name>
    <name type="ordered locus">NMCC_1438</name>
</gene>
<proteinExistence type="inferred from homology"/>
<reference key="1">
    <citation type="journal article" date="2008" name="Genomics">
        <title>Characterization of ST-4821 complex, a unique Neisseria meningitidis clone.</title>
        <authorList>
            <person name="Peng J."/>
            <person name="Yang L."/>
            <person name="Yang F."/>
            <person name="Yang J."/>
            <person name="Yan Y."/>
            <person name="Nie H."/>
            <person name="Zhang X."/>
            <person name="Xiong Z."/>
            <person name="Jiang Y."/>
            <person name="Cheng F."/>
            <person name="Xu X."/>
            <person name="Chen S."/>
            <person name="Sun L."/>
            <person name="Li W."/>
            <person name="Shen Y."/>
            <person name="Shao Z."/>
            <person name="Liang X."/>
            <person name="Xu J."/>
            <person name="Jin Q."/>
        </authorList>
    </citation>
    <scope>NUCLEOTIDE SEQUENCE [LARGE SCALE GENOMIC DNA]</scope>
    <source>
        <strain>053442</strain>
    </source>
</reference>
<evidence type="ECO:0000255" key="1">
    <source>
        <dbReference type="HAMAP-Rule" id="MF_01690"/>
    </source>
</evidence>
<keyword id="KW-0028">Amino-acid biosynthesis</keyword>
<keyword id="KW-0170">Cobalt</keyword>
<keyword id="KW-0220">Diaminopimelate biosynthesis</keyword>
<keyword id="KW-0378">Hydrolase</keyword>
<keyword id="KW-0457">Lysine biosynthesis</keyword>
<keyword id="KW-0479">Metal-binding</keyword>
<keyword id="KW-0862">Zinc</keyword>
<dbReference type="EC" id="3.5.1.18" evidence="1"/>
<dbReference type="EMBL" id="CP000381">
    <property type="protein sequence ID" value="ABX73604.1"/>
    <property type="molecule type" value="Genomic_DNA"/>
</dbReference>
<dbReference type="RefSeq" id="WP_012221855.1">
    <property type="nucleotide sequence ID" value="NC_010120.1"/>
</dbReference>
<dbReference type="SMR" id="A9M0W6"/>
<dbReference type="KEGG" id="nmn:NMCC_1438"/>
<dbReference type="HOGENOM" id="CLU_021802_4_0_4"/>
<dbReference type="UniPathway" id="UPA00034">
    <property type="reaction ID" value="UER00021"/>
</dbReference>
<dbReference type="Proteomes" id="UP000001177">
    <property type="component" value="Chromosome"/>
</dbReference>
<dbReference type="GO" id="GO:0008777">
    <property type="term" value="F:acetylornithine deacetylase activity"/>
    <property type="evidence" value="ECO:0007669"/>
    <property type="project" value="TreeGrafter"/>
</dbReference>
<dbReference type="GO" id="GO:0050897">
    <property type="term" value="F:cobalt ion binding"/>
    <property type="evidence" value="ECO:0007669"/>
    <property type="project" value="UniProtKB-UniRule"/>
</dbReference>
<dbReference type="GO" id="GO:0009014">
    <property type="term" value="F:succinyl-diaminopimelate desuccinylase activity"/>
    <property type="evidence" value="ECO:0007669"/>
    <property type="project" value="UniProtKB-UniRule"/>
</dbReference>
<dbReference type="GO" id="GO:0008270">
    <property type="term" value="F:zinc ion binding"/>
    <property type="evidence" value="ECO:0007669"/>
    <property type="project" value="UniProtKB-UniRule"/>
</dbReference>
<dbReference type="GO" id="GO:0019877">
    <property type="term" value="P:diaminopimelate biosynthetic process"/>
    <property type="evidence" value="ECO:0007669"/>
    <property type="project" value="UniProtKB-UniRule"/>
</dbReference>
<dbReference type="GO" id="GO:0006526">
    <property type="term" value="P:L-arginine biosynthetic process"/>
    <property type="evidence" value="ECO:0007669"/>
    <property type="project" value="TreeGrafter"/>
</dbReference>
<dbReference type="GO" id="GO:0009089">
    <property type="term" value="P:lysine biosynthetic process via diaminopimelate"/>
    <property type="evidence" value="ECO:0007669"/>
    <property type="project" value="UniProtKB-UniRule"/>
</dbReference>
<dbReference type="CDD" id="cd03891">
    <property type="entry name" value="M20_DapE_proteobac"/>
    <property type="match status" value="1"/>
</dbReference>
<dbReference type="FunFam" id="3.30.70.360:FF:000011">
    <property type="entry name" value="Succinyl-diaminopimelate desuccinylase"/>
    <property type="match status" value="1"/>
</dbReference>
<dbReference type="FunFam" id="3.40.630.10:FF:000005">
    <property type="entry name" value="Succinyl-diaminopimelate desuccinylase"/>
    <property type="match status" value="1"/>
</dbReference>
<dbReference type="FunFam" id="3.40.630.10:FF:000010">
    <property type="entry name" value="Succinyl-diaminopimelate desuccinylase"/>
    <property type="match status" value="1"/>
</dbReference>
<dbReference type="Gene3D" id="3.40.630.10">
    <property type="entry name" value="Zn peptidases"/>
    <property type="match status" value="2"/>
</dbReference>
<dbReference type="HAMAP" id="MF_01690">
    <property type="entry name" value="DapE"/>
    <property type="match status" value="1"/>
</dbReference>
<dbReference type="InterPro" id="IPR036264">
    <property type="entry name" value="Bact_exopeptidase_dim_dom"/>
</dbReference>
<dbReference type="InterPro" id="IPR005941">
    <property type="entry name" value="DapE_proteobac"/>
</dbReference>
<dbReference type="InterPro" id="IPR002933">
    <property type="entry name" value="Peptidase_M20"/>
</dbReference>
<dbReference type="InterPro" id="IPR011650">
    <property type="entry name" value="Peptidase_M20_dimer"/>
</dbReference>
<dbReference type="InterPro" id="IPR050072">
    <property type="entry name" value="Peptidase_M20A"/>
</dbReference>
<dbReference type="NCBIfam" id="TIGR01246">
    <property type="entry name" value="dapE_proteo"/>
    <property type="match status" value="1"/>
</dbReference>
<dbReference type="NCBIfam" id="NF009557">
    <property type="entry name" value="PRK13009.1"/>
    <property type="match status" value="1"/>
</dbReference>
<dbReference type="PANTHER" id="PTHR43808">
    <property type="entry name" value="ACETYLORNITHINE DEACETYLASE"/>
    <property type="match status" value="1"/>
</dbReference>
<dbReference type="PANTHER" id="PTHR43808:SF31">
    <property type="entry name" value="N-ACETYL-L-CITRULLINE DEACETYLASE"/>
    <property type="match status" value="1"/>
</dbReference>
<dbReference type="Pfam" id="PF07687">
    <property type="entry name" value="M20_dimer"/>
    <property type="match status" value="1"/>
</dbReference>
<dbReference type="Pfam" id="PF01546">
    <property type="entry name" value="Peptidase_M20"/>
    <property type="match status" value="1"/>
</dbReference>
<dbReference type="SUPFAM" id="SSF55031">
    <property type="entry name" value="Bacterial exopeptidase dimerisation domain"/>
    <property type="match status" value="1"/>
</dbReference>
<dbReference type="SUPFAM" id="SSF53187">
    <property type="entry name" value="Zn-dependent exopeptidases"/>
    <property type="match status" value="1"/>
</dbReference>
<name>DAPE_NEIM0</name>
<sequence length="381" mass="41322">MTETQSLELAKALISRPSVTPDDRDCQKLLVERLYKIGFAAEELHFGDTKNIWLRRGTKVPVVCFAGHTDVVPTGPVEKWDSPPFEPTERDGRLYGRGAADMKTSIACFVTACERFVAEHPDHQGSIALLITSDEEGDALDGTTKVVDVLKARGELIDYCIVGEPTAVDKLGDMIKNGRRGSLSGNLTVKGKQGHIAYPHLAINPVHTFAPALLELTQEVWDEGNKYFPPTSFQISNINGGTGATNVIPGELNVKFNFRFSTESTEAGLKQRVHAILDKHGVQYDLQWSCSGQPFLTQAGKLTDVARAAIAETCGIEAELSTTGGTSDGRFIKAIAKELIELGPSNATIHQINENVRLNDIPKLSAVYEGILARLLAGNAV</sequence>
<organism>
    <name type="scientific">Neisseria meningitidis serogroup C (strain 053442)</name>
    <dbReference type="NCBI Taxonomy" id="374833"/>
    <lineage>
        <taxon>Bacteria</taxon>
        <taxon>Pseudomonadati</taxon>
        <taxon>Pseudomonadota</taxon>
        <taxon>Betaproteobacteria</taxon>
        <taxon>Neisseriales</taxon>
        <taxon>Neisseriaceae</taxon>
        <taxon>Neisseria</taxon>
    </lineage>
</organism>
<comment type="function">
    <text evidence="1">Catalyzes the hydrolysis of N-succinyl-L,L-diaminopimelic acid (SDAP), forming succinate and LL-2,6-diaminopimelate (DAP), an intermediate involved in the bacterial biosynthesis of lysine and meso-diaminopimelic acid, an essential component of bacterial cell walls.</text>
</comment>
<comment type="catalytic activity">
    <reaction evidence="1">
        <text>N-succinyl-(2S,6S)-2,6-diaminopimelate + H2O = (2S,6S)-2,6-diaminopimelate + succinate</text>
        <dbReference type="Rhea" id="RHEA:22608"/>
        <dbReference type="ChEBI" id="CHEBI:15377"/>
        <dbReference type="ChEBI" id="CHEBI:30031"/>
        <dbReference type="ChEBI" id="CHEBI:57609"/>
        <dbReference type="ChEBI" id="CHEBI:58087"/>
        <dbReference type="EC" id="3.5.1.18"/>
    </reaction>
</comment>
<comment type="cofactor">
    <cofactor evidence="1">
        <name>Zn(2+)</name>
        <dbReference type="ChEBI" id="CHEBI:29105"/>
    </cofactor>
    <cofactor evidence="1">
        <name>Co(2+)</name>
        <dbReference type="ChEBI" id="CHEBI:48828"/>
    </cofactor>
    <text evidence="1">Binds 2 Zn(2+) or Co(2+) ions per subunit.</text>
</comment>
<comment type="pathway">
    <text evidence="1">Amino-acid biosynthesis; L-lysine biosynthesis via DAP pathway; LL-2,6-diaminopimelate from (S)-tetrahydrodipicolinate (succinylase route): step 3/3.</text>
</comment>
<comment type="subunit">
    <text evidence="1">Homodimer.</text>
</comment>
<comment type="similarity">
    <text evidence="1">Belongs to the peptidase M20A family. DapE subfamily.</text>
</comment>